<proteinExistence type="evidence at transcript level"/>
<sequence length="553" mass="61214">MPAFSQATDLSAWKELQEHHTAVGRNIVLKEAFEKDPQRFEKFSRTFKNTVDNSDILFDFSKNFLTEETLSLLVKLAKEANVEELRDAMFKGEHINFTEDRAVYHAALRNVSNEPMQVDGKSVVEDVNSVLEHMKEFSEQVRSGEWKGYTDKKIDTIINIGIGGSDLGPVMVTEALKPYGAPGMKLHFVSNIDGTHIAEALKDSNPETTLFLIASKTFTTAETTTNANSAKKWFLETAKDESHIAKHFVALSTNEAEVTKFGIDKKNMFGFESWVGGRYSVWSAIGLSVALYIGYDNFHQFLAGAQAMDKHFREAPLEQNIPAIGGLLSVWYSDFFGAQTHLVAPFDQYLHRFPAYLQQLSMESNGKAITRSGEYVKYTTGPILFGEPATNAQHSFFQLLHQGTKLIPSDFIMAAESHNPVEGGKHQRMLASNFLAQSEALMVGKTPEQVKTEGAPDNLVPHKTFLGNRPTTSILAQKITPSTLGALIAYYEHLTFTEGAVWNINSFDQWGVELGKVLAKKIQQELETSGAGAGHDASTSGLLAAFKQKANLA</sequence>
<gene>
    <name type="primary">pgiA</name>
    <name type="ORF">AO090011000659</name>
</gene>
<comment type="function">
    <text evidence="1">In the cytoplasm, catalyzes the conversion of glucose-6-phosphate to fructose-6-phosphate, the second step in glycolysis, and the reverse reaction during gluconeogenesis.</text>
</comment>
<comment type="catalytic activity">
    <reaction evidence="1">
        <text>alpha-D-glucose 6-phosphate = beta-D-fructose 6-phosphate</text>
        <dbReference type="Rhea" id="RHEA:11816"/>
        <dbReference type="ChEBI" id="CHEBI:57634"/>
        <dbReference type="ChEBI" id="CHEBI:58225"/>
        <dbReference type="EC" id="5.3.1.9"/>
    </reaction>
</comment>
<comment type="pathway">
    <text evidence="4">Carbohydrate degradation; glycolysis; D-glyceraldehyde 3-phosphate and glycerone phosphate from D-glucose: step 2/4.</text>
</comment>
<comment type="subunit">
    <text evidence="1">Homodimer.</text>
</comment>
<comment type="subcellular location">
    <subcellularLocation>
        <location evidence="3">Cytoplasm</location>
        <location evidence="3">Cytosol</location>
    </subcellularLocation>
</comment>
<comment type="similarity">
    <text evidence="4">Belongs to the GPI family.</text>
</comment>
<name>G6PI_ASPOR</name>
<feature type="chain" id="PRO_0000180571" description="Glucose-6-phosphate isomerase">
    <location>
        <begin position="1"/>
        <end position="553"/>
    </location>
</feature>
<feature type="active site" description="Proton donor" evidence="1">
    <location>
        <position position="363"/>
    </location>
</feature>
<feature type="active site" evidence="1">
    <location>
        <position position="394"/>
    </location>
</feature>
<feature type="active site" evidence="1">
    <location>
        <position position="516"/>
    </location>
</feature>
<feature type="binding site" evidence="2">
    <location>
        <begin position="164"/>
        <end position="165"/>
    </location>
    <ligand>
        <name>D-glucose 6-phosphate</name>
        <dbReference type="ChEBI" id="CHEBI:61548"/>
    </ligand>
</feature>
<feature type="binding site" evidence="2">
    <location>
        <begin position="215"/>
        <end position="220"/>
    </location>
    <ligand>
        <name>D-glucose 6-phosphate</name>
        <dbReference type="ChEBI" id="CHEBI:61548"/>
    </ligand>
</feature>
<feature type="binding site" evidence="2">
    <location>
        <position position="359"/>
    </location>
    <ligand>
        <name>D-glucose 6-phosphate</name>
        <dbReference type="ChEBI" id="CHEBI:61548"/>
    </ligand>
</feature>
<feature type="binding site" evidence="2">
    <location>
        <position position="363"/>
    </location>
    <ligand>
        <name>D-glucose 6-phosphate</name>
        <dbReference type="ChEBI" id="CHEBI:61548"/>
    </ligand>
</feature>
<feature type="binding site" evidence="2">
    <location>
        <position position="394"/>
    </location>
    <ligand>
        <name>D-glucose 6-phosphate</name>
        <dbReference type="ChEBI" id="CHEBI:61548"/>
    </ligand>
</feature>
<feature type="binding site" evidence="2">
    <location>
        <position position="516"/>
    </location>
    <ligand>
        <name>D-glucose 6-phosphate</name>
        <dbReference type="ChEBI" id="CHEBI:61548"/>
    </ligand>
</feature>
<reference key="1">
    <citation type="submission" date="1999-09" db="EMBL/GenBank/DDBJ databases">
        <title>Molecular cloning and characterization of glycolytic gene from Aspergillus oryzae.</title>
        <authorList>
            <person name="Nakajima K."/>
            <person name="Kunihiro S."/>
            <person name="Sano M."/>
            <person name="Eto S."/>
            <person name="Machida M."/>
        </authorList>
    </citation>
    <scope>NUCLEOTIDE SEQUENCE [MRNA]</scope>
</reference>
<reference key="2">
    <citation type="journal article" date="2005" name="Nature">
        <title>Genome sequencing and analysis of Aspergillus oryzae.</title>
        <authorList>
            <person name="Machida M."/>
            <person name="Asai K."/>
            <person name="Sano M."/>
            <person name="Tanaka T."/>
            <person name="Kumagai T."/>
            <person name="Terai G."/>
            <person name="Kusumoto K."/>
            <person name="Arima T."/>
            <person name="Akita O."/>
            <person name="Kashiwagi Y."/>
            <person name="Abe K."/>
            <person name="Gomi K."/>
            <person name="Horiuchi H."/>
            <person name="Kitamoto K."/>
            <person name="Kobayashi T."/>
            <person name="Takeuchi M."/>
            <person name="Denning D.W."/>
            <person name="Galagan J.E."/>
            <person name="Nierman W.C."/>
            <person name="Yu J."/>
            <person name="Archer D.B."/>
            <person name="Bennett J.W."/>
            <person name="Bhatnagar D."/>
            <person name="Cleveland T.E."/>
            <person name="Fedorova N.D."/>
            <person name="Gotoh O."/>
            <person name="Horikawa H."/>
            <person name="Hosoyama A."/>
            <person name="Ichinomiya M."/>
            <person name="Igarashi R."/>
            <person name="Iwashita K."/>
            <person name="Juvvadi P.R."/>
            <person name="Kato M."/>
            <person name="Kato Y."/>
            <person name="Kin T."/>
            <person name="Kokubun A."/>
            <person name="Maeda H."/>
            <person name="Maeyama N."/>
            <person name="Maruyama J."/>
            <person name="Nagasaki H."/>
            <person name="Nakajima T."/>
            <person name="Oda K."/>
            <person name="Okada K."/>
            <person name="Paulsen I."/>
            <person name="Sakamoto K."/>
            <person name="Sawano T."/>
            <person name="Takahashi M."/>
            <person name="Takase K."/>
            <person name="Terabayashi Y."/>
            <person name="Wortman J.R."/>
            <person name="Yamada O."/>
            <person name="Yamagata Y."/>
            <person name="Anazawa H."/>
            <person name="Hata Y."/>
            <person name="Koide Y."/>
            <person name="Komori T."/>
            <person name="Koyama Y."/>
            <person name="Minetoki T."/>
            <person name="Suharnan S."/>
            <person name="Tanaka A."/>
            <person name="Isono K."/>
            <person name="Kuhara S."/>
            <person name="Ogasawara N."/>
            <person name="Kikuchi H."/>
        </authorList>
    </citation>
    <scope>NUCLEOTIDE SEQUENCE [LARGE SCALE GENOMIC DNA]</scope>
    <source>
        <strain>ATCC 42149 / RIB 40</strain>
    </source>
</reference>
<accession>Q9HGZ2</accession>
<accession>Q2TZZ3</accession>
<evidence type="ECO:0000250" key="1">
    <source>
        <dbReference type="UniProtKB" id="P06744"/>
    </source>
</evidence>
<evidence type="ECO:0000250" key="2">
    <source>
        <dbReference type="UniProtKB" id="P06745"/>
    </source>
</evidence>
<evidence type="ECO:0000250" key="3">
    <source>
        <dbReference type="UniProtKB" id="P78917"/>
    </source>
</evidence>
<evidence type="ECO:0000305" key="4"/>
<organism>
    <name type="scientific">Aspergillus oryzae (strain ATCC 42149 / RIB 40)</name>
    <name type="common">Yellow koji mold</name>
    <dbReference type="NCBI Taxonomy" id="510516"/>
    <lineage>
        <taxon>Eukaryota</taxon>
        <taxon>Fungi</taxon>
        <taxon>Dikarya</taxon>
        <taxon>Ascomycota</taxon>
        <taxon>Pezizomycotina</taxon>
        <taxon>Eurotiomycetes</taxon>
        <taxon>Eurotiomycetidae</taxon>
        <taxon>Eurotiales</taxon>
        <taxon>Aspergillaceae</taxon>
        <taxon>Aspergillus</taxon>
        <taxon>Aspergillus subgen. Circumdati</taxon>
    </lineage>
</organism>
<keyword id="KW-0963">Cytoplasm</keyword>
<keyword id="KW-0312">Gluconeogenesis</keyword>
<keyword id="KW-0324">Glycolysis</keyword>
<keyword id="KW-0413">Isomerase</keyword>
<keyword id="KW-1185">Reference proteome</keyword>
<dbReference type="EC" id="5.3.1.9" evidence="1"/>
<dbReference type="EMBL" id="AB032269">
    <property type="protein sequence ID" value="BAB12229.1"/>
    <property type="molecule type" value="mRNA"/>
</dbReference>
<dbReference type="EMBL" id="BA000055">
    <property type="protein sequence ID" value="BAE65122.1"/>
    <property type="molecule type" value="Genomic_DNA"/>
</dbReference>
<dbReference type="RefSeq" id="XP_001826255.1">
    <property type="nucleotide sequence ID" value="XM_001826203.2"/>
</dbReference>
<dbReference type="SMR" id="Q9HGZ2"/>
<dbReference type="STRING" id="510516.Q9HGZ2"/>
<dbReference type="EnsemblFungi" id="BAE65122">
    <property type="protein sequence ID" value="BAE65122"/>
    <property type="gene ID" value="AO090011000659"/>
</dbReference>
<dbReference type="GeneID" id="5998358"/>
<dbReference type="KEGG" id="aor:AO090011000659"/>
<dbReference type="VEuPathDB" id="FungiDB:AO090011000659"/>
<dbReference type="HOGENOM" id="CLU_017947_3_0_1"/>
<dbReference type="OMA" id="DWYRQLW"/>
<dbReference type="OrthoDB" id="67244at5052"/>
<dbReference type="UniPathway" id="UPA00109">
    <property type="reaction ID" value="UER00181"/>
</dbReference>
<dbReference type="Proteomes" id="UP000006564">
    <property type="component" value="Chromosome 7"/>
</dbReference>
<dbReference type="GO" id="GO:0005829">
    <property type="term" value="C:cytosol"/>
    <property type="evidence" value="ECO:0007669"/>
    <property type="project" value="UniProtKB-SubCell"/>
</dbReference>
<dbReference type="GO" id="GO:0005739">
    <property type="term" value="C:mitochondrion"/>
    <property type="evidence" value="ECO:0007669"/>
    <property type="project" value="EnsemblFungi"/>
</dbReference>
<dbReference type="GO" id="GO:0097367">
    <property type="term" value="F:carbohydrate derivative binding"/>
    <property type="evidence" value="ECO:0007669"/>
    <property type="project" value="InterPro"/>
</dbReference>
<dbReference type="GO" id="GO:0004347">
    <property type="term" value="F:glucose-6-phosphate isomerase activity"/>
    <property type="evidence" value="ECO:0007669"/>
    <property type="project" value="UniProtKB-EC"/>
</dbReference>
<dbReference type="GO" id="GO:0048029">
    <property type="term" value="F:monosaccharide binding"/>
    <property type="evidence" value="ECO:0007669"/>
    <property type="project" value="TreeGrafter"/>
</dbReference>
<dbReference type="GO" id="GO:0006094">
    <property type="term" value="P:gluconeogenesis"/>
    <property type="evidence" value="ECO:0007669"/>
    <property type="project" value="UniProtKB-KW"/>
</dbReference>
<dbReference type="GO" id="GO:0051156">
    <property type="term" value="P:glucose 6-phosphate metabolic process"/>
    <property type="evidence" value="ECO:0007669"/>
    <property type="project" value="TreeGrafter"/>
</dbReference>
<dbReference type="GO" id="GO:0006096">
    <property type="term" value="P:glycolytic process"/>
    <property type="evidence" value="ECO:0007669"/>
    <property type="project" value="UniProtKB-UniPathway"/>
</dbReference>
<dbReference type="CDD" id="cd05015">
    <property type="entry name" value="SIS_PGI_1"/>
    <property type="match status" value="1"/>
</dbReference>
<dbReference type="CDD" id="cd05016">
    <property type="entry name" value="SIS_PGI_2"/>
    <property type="match status" value="1"/>
</dbReference>
<dbReference type="FunFam" id="1.10.1390.10:FF:000001">
    <property type="entry name" value="Glucose-6-phosphate isomerase"/>
    <property type="match status" value="1"/>
</dbReference>
<dbReference type="FunFam" id="3.40.50.10490:FF:000004">
    <property type="entry name" value="Glucose-6-phosphate isomerase"/>
    <property type="match status" value="1"/>
</dbReference>
<dbReference type="Gene3D" id="1.10.1390.10">
    <property type="match status" value="1"/>
</dbReference>
<dbReference type="Gene3D" id="3.40.50.10490">
    <property type="entry name" value="Glucose-6-phosphate isomerase like protein, domain 1"/>
    <property type="match status" value="2"/>
</dbReference>
<dbReference type="HAMAP" id="MF_00473">
    <property type="entry name" value="G6P_isomerase"/>
    <property type="match status" value="1"/>
</dbReference>
<dbReference type="InterPro" id="IPR001672">
    <property type="entry name" value="G6P_Isomerase"/>
</dbReference>
<dbReference type="InterPro" id="IPR023096">
    <property type="entry name" value="G6P_Isomerase_C"/>
</dbReference>
<dbReference type="InterPro" id="IPR018189">
    <property type="entry name" value="Phosphoglucose_isomerase_CS"/>
</dbReference>
<dbReference type="InterPro" id="IPR046348">
    <property type="entry name" value="SIS_dom_sf"/>
</dbReference>
<dbReference type="InterPro" id="IPR035476">
    <property type="entry name" value="SIS_PGI_1"/>
</dbReference>
<dbReference type="InterPro" id="IPR035482">
    <property type="entry name" value="SIS_PGI_2"/>
</dbReference>
<dbReference type="NCBIfam" id="NF001211">
    <property type="entry name" value="PRK00179.1"/>
    <property type="match status" value="1"/>
</dbReference>
<dbReference type="PANTHER" id="PTHR11469">
    <property type="entry name" value="GLUCOSE-6-PHOSPHATE ISOMERASE"/>
    <property type="match status" value="1"/>
</dbReference>
<dbReference type="PANTHER" id="PTHR11469:SF1">
    <property type="entry name" value="GLUCOSE-6-PHOSPHATE ISOMERASE"/>
    <property type="match status" value="1"/>
</dbReference>
<dbReference type="Pfam" id="PF00342">
    <property type="entry name" value="PGI"/>
    <property type="match status" value="1"/>
</dbReference>
<dbReference type="PRINTS" id="PR00662">
    <property type="entry name" value="G6PISOMERASE"/>
</dbReference>
<dbReference type="SUPFAM" id="SSF53697">
    <property type="entry name" value="SIS domain"/>
    <property type="match status" value="1"/>
</dbReference>
<dbReference type="PROSITE" id="PS00765">
    <property type="entry name" value="P_GLUCOSE_ISOMERASE_1"/>
    <property type="match status" value="1"/>
</dbReference>
<dbReference type="PROSITE" id="PS00174">
    <property type="entry name" value="P_GLUCOSE_ISOMERASE_2"/>
    <property type="match status" value="1"/>
</dbReference>
<dbReference type="PROSITE" id="PS51463">
    <property type="entry name" value="P_GLUCOSE_ISOMERASE_3"/>
    <property type="match status" value="1"/>
</dbReference>
<protein>
    <recommendedName>
        <fullName>Glucose-6-phosphate isomerase</fullName>
        <shortName>GPI</shortName>
        <ecNumber evidence="1">5.3.1.9</ecNumber>
    </recommendedName>
    <alternativeName>
        <fullName>Phosphoglucose isomerase</fullName>
        <shortName>PGI</shortName>
    </alternativeName>
    <alternativeName>
        <fullName>Phosphohexose isomerase</fullName>
        <shortName>PHI</shortName>
    </alternativeName>
</protein>